<keyword id="KW-0150">Chloroplast</keyword>
<keyword id="KW-0934">Plastid</keyword>
<keyword id="KW-1185">Reference proteome</keyword>
<keyword id="KW-0687">Ribonucleoprotein</keyword>
<keyword id="KW-0689">Ribosomal protein</keyword>
<keyword id="KW-0694">RNA-binding</keyword>
<keyword id="KW-0699">rRNA-binding</keyword>
<comment type="function">
    <text evidence="1">One of the primary rRNA binding proteins, it binds directly to 16S rRNA where it nucleates assembly of the body of the 30S subunit.</text>
</comment>
<comment type="function">
    <text evidence="1">With S5 and S12 plays an important role in translational accuracy.</text>
</comment>
<comment type="subunit">
    <text evidence="1">Part of the 30S ribosomal subunit. Contacts protein S5. The interaction surface between S4 and S5 is involved in control of translational fidelity (By similarity).</text>
</comment>
<comment type="subcellular location">
    <subcellularLocation>
        <location>Plastid</location>
        <location>Chloroplast</location>
    </subcellularLocation>
</comment>
<comment type="similarity">
    <text evidence="3">Belongs to the universal ribosomal protein uS4 family.</text>
</comment>
<accession>Q2L908</accession>
<proteinExistence type="inferred from homology"/>
<gene>
    <name type="primary">rps4</name>
</gene>
<dbReference type="EMBL" id="DQ345959">
    <property type="protein sequence ID" value="ABC73630.1"/>
    <property type="molecule type" value="Genomic_DNA"/>
</dbReference>
<dbReference type="RefSeq" id="YP_538937.1">
    <property type="nucleotide sequence ID" value="NC_007944.1"/>
</dbReference>
<dbReference type="SMR" id="Q2L908"/>
<dbReference type="GeneID" id="3989146"/>
<dbReference type="KEGG" id="ghi:3989146"/>
<dbReference type="OMA" id="QLVVELY"/>
<dbReference type="OrthoDB" id="17813at41938"/>
<dbReference type="Proteomes" id="UP000189702">
    <property type="component" value="Chloroplast Pltd"/>
</dbReference>
<dbReference type="GO" id="GO:0009507">
    <property type="term" value="C:chloroplast"/>
    <property type="evidence" value="ECO:0007669"/>
    <property type="project" value="UniProtKB-SubCell"/>
</dbReference>
<dbReference type="GO" id="GO:0015935">
    <property type="term" value="C:small ribosomal subunit"/>
    <property type="evidence" value="ECO:0000318"/>
    <property type="project" value="GO_Central"/>
</dbReference>
<dbReference type="GO" id="GO:0019843">
    <property type="term" value="F:rRNA binding"/>
    <property type="evidence" value="ECO:0000318"/>
    <property type="project" value="GO_Central"/>
</dbReference>
<dbReference type="GO" id="GO:0003735">
    <property type="term" value="F:structural constituent of ribosome"/>
    <property type="evidence" value="ECO:0000318"/>
    <property type="project" value="GO_Central"/>
</dbReference>
<dbReference type="GO" id="GO:0042274">
    <property type="term" value="P:ribosomal small subunit biogenesis"/>
    <property type="evidence" value="ECO:0000318"/>
    <property type="project" value="GO_Central"/>
</dbReference>
<dbReference type="GO" id="GO:0006412">
    <property type="term" value="P:translation"/>
    <property type="evidence" value="ECO:0007669"/>
    <property type="project" value="UniProtKB-UniRule"/>
</dbReference>
<dbReference type="CDD" id="cd00165">
    <property type="entry name" value="S4"/>
    <property type="match status" value="1"/>
</dbReference>
<dbReference type="FunFam" id="1.10.1050.10:FF:000002">
    <property type="entry name" value="30S ribosomal protein S4, chloroplastic"/>
    <property type="match status" value="1"/>
</dbReference>
<dbReference type="FunFam" id="3.10.290.10:FF:000081">
    <property type="entry name" value="30S ribosomal protein S4, chloroplastic"/>
    <property type="match status" value="1"/>
</dbReference>
<dbReference type="Gene3D" id="1.10.1050.10">
    <property type="entry name" value="Ribosomal Protein S4 Delta 41, Chain A, domain 1"/>
    <property type="match status" value="1"/>
</dbReference>
<dbReference type="Gene3D" id="3.10.290.10">
    <property type="entry name" value="RNA-binding S4 domain"/>
    <property type="match status" value="1"/>
</dbReference>
<dbReference type="HAMAP" id="MF_01306_B">
    <property type="entry name" value="Ribosomal_uS4_B"/>
    <property type="match status" value="1"/>
</dbReference>
<dbReference type="InterPro" id="IPR022801">
    <property type="entry name" value="Ribosomal_uS4"/>
</dbReference>
<dbReference type="InterPro" id="IPR005709">
    <property type="entry name" value="Ribosomal_uS4_bac-type"/>
</dbReference>
<dbReference type="InterPro" id="IPR018079">
    <property type="entry name" value="Ribosomal_uS4_CS"/>
</dbReference>
<dbReference type="InterPro" id="IPR001912">
    <property type="entry name" value="Ribosomal_uS4_N"/>
</dbReference>
<dbReference type="InterPro" id="IPR002942">
    <property type="entry name" value="S4_RNA-bd"/>
</dbReference>
<dbReference type="InterPro" id="IPR036986">
    <property type="entry name" value="S4_RNA-bd_sf"/>
</dbReference>
<dbReference type="NCBIfam" id="NF003717">
    <property type="entry name" value="PRK05327.1"/>
    <property type="match status" value="1"/>
</dbReference>
<dbReference type="NCBIfam" id="TIGR01017">
    <property type="entry name" value="rpsD_bact"/>
    <property type="match status" value="1"/>
</dbReference>
<dbReference type="PANTHER" id="PTHR11831">
    <property type="entry name" value="30S 40S RIBOSOMAL PROTEIN"/>
    <property type="match status" value="1"/>
</dbReference>
<dbReference type="PANTHER" id="PTHR11831:SF4">
    <property type="entry name" value="SMALL RIBOSOMAL SUBUNIT PROTEIN US4M"/>
    <property type="match status" value="1"/>
</dbReference>
<dbReference type="Pfam" id="PF00163">
    <property type="entry name" value="Ribosomal_S4"/>
    <property type="match status" value="1"/>
</dbReference>
<dbReference type="Pfam" id="PF01479">
    <property type="entry name" value="S4"/>
    <property type="match status" value="1"/>
</dbReference>
<dbReference type="SMART" id="SM01390">
    <property type="entry name" value="Ribosomal_S4"/>
    <property type="match status" value="1"/>
</dbReference>
<dbReference type="SMART" id="SM00363">
    <property type="entry name" value="S4"/>
    <property type="match status" value="1"/>
</dbReference>
<dbReference type="SUPFAM" id="SSF55174">
    <property type="entry name" value="Alpha-L RNA-binding motif"/>
    <property type="match status" value="1"/>
</dbReference>
<dbReference type="PROSITE" id="PS00632">
    <property type="entry name" value="RIBOSOMAL_S4"/>
    <property type="match status" value="1"/>
</dbReference>
<dbReference type="PROSITE" id="PS50889">
    <property type="entry name" value="S4"/>
    <property type="match status" value="1"/>
</dbReference>
<reference key="1">
    <citation type="journal article" date="2006" name="BMC Genomics">
        <title>The complete chloroplast genome sequence of Gossypium hirsutum: organization and phylogenetic relationships to other angiosperms.</title>
        <authorList>
            <person name="Lee S.-B."/>
            <person name="Kaittanis C."/>
            <person name="Jansen R.K."/>
            <person name="Hostetler J.B."/>
            <person name="Tallon L.J."/>
            <person name="Town C.D."/>
            <person name="Daniell H."/>
        </authorList>
    </citation>
    <scope>NUCLEOTIDE SEQUENCE [LARGE SCALE GENOMIC DNA]</scope>
    <source>
        <strain>cv. Coker 310FR</strain>
    </source>
</reference>
<feature type="chain" id="PRO_0000228948" description="Small ribosomal subunit protein uS4c">
    <location>
        <begin position="1"/>
        <end position="201"/>
    </location>
</feature>
<feature type="domain" description="S4 RNA-binding">
    <location>
        <begin position="89"/>
        <end position="169"/>
    </location>
</feature>
<feature type="region of interest" description="Disordered" evidence="2">
    <location>
        <begin position="14"/>
        <end position="43"/>
    </location>
</feature>
<protein>
    <recommendedName>
        <fullName evidence="3">Small ribosomal subunit protein uS4c</fullName>
    </recommendedName>
    <alternativeName>
        <fullName>30S ribosomal protein S4, chloroplastic</fullName>
    </alternativeName>
</protein>
<organism>
    <name type="scientific">Gossypium hirsutum</name>
    <name type="common">Upland cotton</name>
    <name type="synonym">Gossypium mexicanum</name>
    <dbReference type="NCBI Taxonomy" id="3635"/>
    <lineage>
        <taxon>Eukaryota</taxon>
        <taxon>Viridiplantae</taxon>
        <taxon>Streptophyta</taxon>
        <taxon>Embryophyta</taxon>
        <taxon>Tracheophyta</taxon>
        <taxon>Spermatophyta</taxon>
        <taxon>Magnoliopsida</taxon>
        <taxon>eudicotyledons</taxon>
        <taxon>Gunneridae</taxon>
        <taxon>Pentapetalae</taxon>
        <taxon>rosids</taxon>
        <taxon>malvids</taxon>
        <taxon>Malvales</taxon>
        <taxon>Malvaceae</taxon>
        <taxon>Malvoideae</taxon>
        <taxon>Gossypium</taxon>
    </lineage>
</organism>
<sequence length="201" mass="23623">MSRYRGPRFKKIRRLGALPGLTSKRPRAGSDLRNQSRPGKKSQYRIRLEEKQKLRFHYGLTERQLLKYVRIARKAKGSTGQVLLQLLEMRLDNILFRLGMASTIPQARQLVNHRHILVNGRTVDIPSYRCKPRDIISARDEQKSRTLIQNYLDSSTNEELPKHLTFHTLQYKGLVNQIIDRKWVGLKINELLVVEYYSRQT</sequence>
<evidence type="ECO:0000250" key="1"/>
<evidence type="ECO:0000256" key="2">
    <source>
        <dbReference type="SAM" id="MobiDB-lite"/>
    </source>
</evidence>
<evidence type="ECO:0000305" key="3"/>
<geneLocation type="chloroplast"/>
<name>RR4_GOSHI</name>